<evidence type="ECO:0000255" key="1">
    <source>
        <dbReference type="HAMAP-Rule" id="MF_00046"/>
    </source>
</evidence>
<feature type="chain" id="PRO_0000182185" description="UDP-N-acetylmuramate--L-alanine ligase">
    <location>
        <begin position="1"/>
        <end position="498"/>
    </location>
</feature>
<feature type="binding site" evidence="1">
    <location>
        <begin position="133"/>
        <end position="139"/>
    </location>
    <ligand>
        <name>ATP</name>
        <dbReference type="ChEBI" id="CHEBI:30616"/>
    </ligand>
</feature>
<comment type="function">
    <text evidence="1">Cell wall formation.</text>
</comment>
<comment type="catalytic activity">
    <reaction evidence="1">
        <text>UDP-N-acetyl-alpha-D-muramate + L-alanine + ATP = UDP-N-acetyl-alpha-D-muramoyl-L-alanine + ADP + phosphate + H(+)</text>
        <dbReference type="Rhea" id="RHEA:23372"/>
        <dbReference type="ChEBI" id="CHEBI:15378"/>
        <dbReference type="ChEBI" id="CHEBI:30616"/>
        <dbReference type="ChEBI" id="CHEBI:43474"/>
        <dbReference type="ChEBI" id="CHEBI:57972"/>
        <dbReference type="ChEBI" id="CHEBI:70757"/>
        <dbReference type="ChEBI" id="CHEBI:83898"/>
        <dbReference type="ChEBI" id="CHEBI:456216"/>
        <dbReference type="EC" id="6.3.2.8"/>
    </reaction>
</comment>
<comment type="pathway">
    <text evidence="1">Cell wall biogenesis; peptidoglycan biosynthesis.</text>
</comment>
<comment type="subcellular location">
    <subcellularLocation>
        <location evidence="1">Cytoplasm</location>
    </subcellularLocation>
</comment>
<comment type="similarity">
    <text evidence="1">Belongs to the MurCDEF family.</text>
</comment>
<accession>P61683</accession>
<sequence length="498" mass="53700">MRILNYTIINLVMSKHLLLNINKTQKGIIHIIGIGGIGMSAIAEILHNSNCKVQGSDAQSNDNINKLQKLGIEVFIGHNANNISQAQIVVHSSAIEFDNVELIAAKNNNKTVLHRSDILAEIMKGKYVIAVSGSSGKTTTTAMIASIFDHSGIDATVTVGGILNSYKSNFKLGGSDTFLIEADESDGTMLKIPAKIAVITSINNDHIDYYGTFDNIKNAFSQFVNNAGSAVLPDSVDIDYDAGNSITFGFENGSIRASNIKQHANSIEFDVLNNWIPALRAGMTKGKCTEMSSQCVTLGSSPLKNIVLSNAIGIHKVSNALAAISVAIKLGISDADIKKGLLEFQGVARRFSLIADIKGVKLIEDYAHHPNEIYATLTAARSITKGKVIGIIEPLRFARIRNFFDEFIRIFMMFDYVILTPVHPPEDKPIPGCGIDDIQKALISNGFNNTKIMNDALLISHFISDSTSPSNIVLFIGAGSNIAKLAKETAALIAEVKV</sequence>
<proteinExistence type="inferred from homology"/>
<gene>
    <name evidence="1" type="primary">murC</name>
    <name type="ordered locus">WD_0495</name>
</gene>
<reference key="1">
    <citation type="journal article" date="2004" name="PLoS Biol.">
        <title>Phylogenomics of the reproductive parasite Wolbachia pipientis wMel: a streamlined genome overrun by mobile genetic elements.</title>
        <authorList>
            <person name="Wu M."/>
            <person name="Sun L.V."/>
            <person name="Vamathevan J.J."/>
            <person name="Riegler M."/>
            <person name="DeBoy R.T."/>
            <person name="Brownlie J.C."/>
            <person name="McGraw E.A."/>
            <person name="Martin W."/>
            <person name="Esser C."/>
            <person name="Ahmadinejad N."/>
            <person name="Wiegand C."/>
            <person name="Madupu R."/>
            <person name="Beanan M.J."/>
            <person name="Brinkac L.M."/>
            <person name="Daugherty S.C."/>
            <person name="Durkin A.S."/>
            <person name="Kolonay J.F."/>
            <person name="Nelson W.C."/>
            <person name="Mohamoud Y."/>
            <person name="Lee P."/>
            <person name="Berry K.J."/>
            <person name="Young M.B."/>
            <person name="Utterback T.R."/>
            <person name="Weidman J.F."/>
            <person name="Nierman W.C."/>
            <person name="Paulsen I.T."/>
            <person name="Nelson K.E."/>
            <person name="Tettelin H."/>
            <person name="O'Neill S.L."/>
            <person name="Eisen J.A."/>
        </authorList>
    </citation>
    <scope>NUCLEOTIDE SEQUENCE [LARGE SCALE GENOMIC DNA]</scope>
</reference>
<name>MURC_WOLPM</name>
<protein>
    <recommendedName>
        <fullName evidence="1">UDP-N-acetylmuramate--L-alanine ligase</fullName>
        <ecNumber evidence="1">6.3.2.8</ecNumber>
    </recommendedName>
    <alternativeName>
        <fullName evidence="1">UDP-N-acetylmuramoyl-L-alanine synthetase</fullName>
    </alternativeName>
</protein>
<dbReference type="EC" id="6.3.2.8" evidence="1"/>
<dbReference type="EMBL" id="AE017196">
    <property type="protein sequence ID" value="AAS14212.1"/>
    <property type="molecule type" value="Genomic_DNA"/>
</dbReference>
<dbReference type="RefSeq" id="WP_010962635.1">
    <property type="nucleotide sequence ID" value="NZ_OX384529.1"/>
</dbReference>
<dbReference type="SMR" id="P61683"/>
<dbReference type="EnsemblBacteria" id="AAS14212">
    <property type="protein sequence ID" value="AAS14212"/>
    <property type="gene ID" value="WD_0495"/>
</dbReference>
<dbReference type="GeneID" id="70035982"/>
<dbReference type="KEGG" id="wol:WD_0495"/>
<dbReference type="eggNOG" id="COG0773">
    <property type="taxonomic scope" value="Bacteria"/>
</dbReference>
<dbReference type="UniPathway" id="UPA00219"/>
<dbReference type="Proteomes" id="UP000008215">
    <property type="component" value="Chromosome"/>
</dbReference>
<dbReference type="GO" id="GO:0005737">
    <property type="term" value="C:cytoplasm"/>
    <property type="evidence" value="ECO:0007669"/>
    <property type="project" value="UniProtKB-SubCell"/>
</dbReference>
<dbReference type="GO" id="GO:0005524">
    <property type="term" value="F:ATP binding"/>
    <property type="evidence" value="ECO:0007669"/>
    <property type="project" value="UniProtKB-UniRule"/>
</dbReference>
<dbReference type="GO" id="GO:0008763">
    <property type="term" value="F:UDP-N-acetylmuramate-L-alanine ligase activity"/>
    <property type="evidence" value="ECO:0007669"/>
    <property type="project" value="UniProtKB-UniRule"/>
</dbReference>
<dbReference type="GO" id="GO:0051301">
    <property type="term" value="P:cell division"/>
    <property type="evidence" value="ECO:0007669"/>
    <property type="project" value="UniProtKB-KW"/>
</dbReference>
<dbReference type="GO" id="GO:0071555">
    <property type="term" value="P:cell wall organization"/>
    <property type="evidence" value="ECO:0007669"/>
    <property type="project" value="UniProtKB-KW"/>
</dbReference>
<dbReference type="GO" id="GO:0009252">
    <property type="term" value="P:peptidoglycan biosynthetic process"/>
    <property type="evidence" value="ECO:0007669"/>
    <property type="project" value="UniProtKB-UniRule"/>
</dbReference>
<dbReference type="GO" id="GO:0008360">
    <property type="term" value="P:regulation of cell shape"/>
    <property type="evidence" value="ECO:0007669"/>
    <property type="project" value="UniProtKB-KW"/>
</dbReference>
<dbReference type="Gene3D" id="3.90.190.20">
    <property type="entry name" value="Mur ligase, C-terminal domain"/>
    <property type="match status" value="1"/>
</dbReference>
<dbReference type="Gene3D" id="3.40.1190.10">
    <property type="entry name" value="Mur-like, catalytic domain"/>
    <property type="match status" value="1"/>
</dbReference>
<dbReference type="Gene3D" id="3.40.50.720">
    <property type="entry name" value="NAD(P)-binding Rossmann-like Domain"/>
    <property type="match status" value="1"/>
</dbReference>
<dbReference type="HAMAP" id="MF_00046">
    <property type="entry name" value="MurC"/>
    <property type="match status" value="1"/>
</dbReference>
<dbReference type="InterPro" id="IPR036565">
    <property type="entry name" value="Mur-like_cat_sf"/>
</dbReference>
<dbReference type="InterPro" id="IPR004101">
    <property type="entry name" value="Mur_ligase_C"/>
</dbReference>
<dbReference type="InterPro" id="IPR036615">
    <property type="entry name" value="Mur_ligase_C_dom_sf"/>
</dbReference>
<dbReference type="InterPro" id="IPR013221">
    <property type="entry name" value="Mur_ligase_cen"/>
</dbReference>
<dbReference type="InterPro" id="IPR000713">
    <property type="entry name" value="Mur_ligase_N"/>
</dbReference>
<dbReference type="InterPro" id="IPR050061">
    <property type="entry name" value="MurCDEF_pg_biosynth"/>
</dbReference>
<dbReference type="InterPro" id="IPR005758">
    <property type="entry name" value="UDP-N-AcMur_Ala_ligase_MurC"/>
</dbReference>
<dbReference type="NCBIfam" id="TIGR01082">
    <property type="entry name" value="murC"/>
    <property type="match status" value="1"/>
</dbReference>
<dbReference type="PANTHER" id="PTHR43445:SF3">
    <property type="entry name" value="UDP-N-ACETYLMURAMATE--L-ALANINE LIGASE"/>
    <property type="match status" value="1"/>
</dbReference>
<dbReference type="PANTHER" id="PTHR43445">
    <property type="entry name" value="UDP-N-ACETYLMURAMATE--L-ALANINE LIGASE-RELATED"/>
    <property type="match status" value="1"/>
</dbReference>
<dbReference type="Pfam" id="PF01225">
    <property type="entry name" value="Mur_ligase"/>
    <property type="match status" value="1"/>
</dbReference>
<dbReference type="Pfam" id="PF02875">
    <property type="entry name" value="Mur_ligase_C"/>
    <property type="match status" value="1"/>
</dbReference>
<dbReference type="Pfam" id="PF08245">
    <property type="entry name" value="Mur_ligase_M"/>
    <property type="match status" value="1"/>
</dbReference>
<dbReference type="SUPFAM" id="SSF51984">
    <property type="entry name" value="MurCD N-terminal domain"/>
    <property type="match status" value="1"/>
</dbReference>
<dbReference type="SUPFAM" id="SSF53623">
    <property type="entry name" value="MurD-like peptide ligases, catalytic domain"/>
    <property type="match status" value="1"/>
</dbReference>
<dbReference type="SUPFAM" id="SSF53244">
    <property type="entry name" value="MurD-like peptide ligases, peptide-binding domain"/>
    <property type="match status" value="1"/>
</dbReference>
<keyword id="KW-0067">ATP-binding</keyword>
<keyword id="KW-0131">Cell cycle</keyword>
<keyword id="KW-0132">Cell division</keyword>
<keyword id="KW-0133">Cell shape</keyword>
<keyword id="KW-0961">Cell wall biogenesis/degradation</keyword>
<keyword id="KW-0963">Cytoplasm</keyword>
<keyword id="KW-0436">Ligase</keyword>
<keyword id="KW-0547">Nucleotide-binding</keyword>
<keyword id="KW-0573">Peptidoglycan synthesis</keyword>
<organism>
    <name type="scientific">Wolbachia pipientis wMel</name>
    <dbReference type="NCBI Taxonomy" id="163164"/>
    <lineage>
        <taxon>Bacteria</taxon>
        <taxon>Pseudomonadati</taxon>
        <taxon>Pseudomonadota</taxon>
        <taxon>Alphaproteobacteria</taxon>
        <taxon>Rickettsiales</taxon>
        <taxon>Anaplasmataceae</taxon>
        <taxon>Wolbachieae</taxon>
        <taxon>Wolbachia</taxon>
    </lineage>
</organism>